<sequence>MKNKRVIKKNFEFQEIINYKKTIKNFCFVIYYKDNEESYLKYGISVGKKIGNAVIRNKVKRQIRMILKQNISEIGTVSKDIIILVRKSVLELKYATLSKLLIKLIKEIK</sequence>
<organism>
    <name type="scientific">Mycoplasma capricolum subsp. capricolum (strain California kid / ATCC 27343 / NCTC 10154)</name>
    <dbReference type="NCBI Taxonomy" id="340047"/>
    <lineage>
        <taxon>Bacteria</taxon>
        <taxon>Bacillati</taxon>
        <taxon>Mycoplasmatota</taxon>
        <taxon>Mollicutes</taxon>
        <taxon>Mycoplasmataceae</taxon>
        <taxon>Mycoplasma</taxon>
    </lineage>
</organism>
<name>RNPA_MYCCT</name>
<proteinExistence type="inferred from homology"/>
<comment type="function">
    <text evidence="1">RNaseP catalyzes the removal of the 5'-leader sequence from pre-tRNA to produce the mature 5'-terminus. It can also cleave other RNA substrates such as 4.5S RNA. The protein component plays an auxiliary but essential role in vivo by binding to the 5'-leader sequence and broadening the substrate specificity of the ribozyme.</text>
</comment>
<comment type="catalytic activity">
    <reaction evidence="1">
        <text>Endonucleolytic cleavage of RNA, removing 5'-extranucleotides from tRNA precursor.</text>
        <dbReference type="EC" id="3.1.26.5"/>
    </reaction>
</comment>
<comment type="subunit">
    <text evidence="1">Consists of a catalytic RNA component (M1 or rnpB) and a protein subunit.</text>
</comment>
<comment type="similarity">
    <text evidence="1">Belongs to the RnpA family.</text>
</comment>
<evidence type="ECO:0000255" key="1">
    <source>
        <dbReference type="HAMAP-Rule" id="MF_00227"/>
    </source>
</evidence>
<reference key="1">
    <citation type="journal article" date="1993" name="Nucleic Acids Res.">
        <title>Mapping of replication initiation site in Mycoplasma capricolum genome by two-dimensional gel-electrophoretic analysis.</title>
        <authorList>
            <person name="Miyata M."/>
            <person name="Sano K."/>
            <person name="Okada R."/>
            <person name="Fukumura T."/>
        </authorList>
    </citation>
    <scope>NUCLEOTIDE SEQUENCE [GENOMIC DNA]</scope>
</reference>
<reference key="2">
    <citation type="submission" date="2005-09" db="EMBL/GenBank/DDBJ databases">
        <authorList>
            <person name="Glass J.I."/>
            <person name="Lartigue C."/>
            <person name="Pfannkoch C."/>
            <person name="Baden-Tillson H."/>
            <person name="Smith H.O."/>
            <person name="Venter J.C."/>
            <person name="Roske K."/>
            <person name="Wise K.S."/>
            <person name="Calcutt M.J."/>
            <person name="Nelson W.C."/>
            <person name="Nierman W.C."/>
        </authorList>
    </citation>
    <scope>NUCLEOTIDE SEQUENCE [LARGE SCALE GENOMIC DNA]</scope>
    <source>
        <strain>California kid / ATCC 27343 / NCTC 10154</strain>
    </source>
</reference>
<dbReference type="EC" id="3.1.26.5" evidence="1"/>
<dbReference type="EMBL" id="D14982">
    <property type="protein sequence ID" value="BAA03619.1"/>
    <property type="molecule type" value="Genomic_DNA"/>
</dbReference>
<dbReference type="EMBL" id="CP000123">
    <property type="protein sequence ID" value="ABC01335.1"/>
    <property type="molecule type" value="Genomic_DNA"/>
</dbReference>
<dbReference type="PIR" id="S42121">
    <property type="entry name" value="S42121"/>
</dbReference>
<dbReference type="RefSeq" id="WP_011387695.1">
    <property type="nucleotide sequence ID" value="NC_007633.1"/>
</dbReference>
<dbReference type="SMR" id="P43039"/>
<dbReference type="GeneID" id="23778178"/>
<dbReference type="KEGG" id="mcp:MCAP_0869"/>
<dbReference type="HOGENOM" id="CLU_117179_9_1_14"/>
<dbReference type="PhylomeDB" id="P43039"/>
<dbReference type="BRENDA" id="3.1.26.5">
    <property type="organism ID" value="3523"/>
</dbReference>
<dbReference type="Proteomes" id="UP000001928">
    <property type="component" value="Chromosome"/>
</dbReference>
<dbReference type="GO" id="GO:0030677">
    <property type="term" value="C:ribonuclease P complex"/>
    <property type="evidence" value="ECO:0007669"/>
    <property type="project" value="TreeGrafter"/>
</dbReference>
<dbReference type="GO" id="GO:0042781">
    <property type="term" value="F:3'-tRNA processing endoribonuclease activity"/>
    <property type="evidence" value="ECO:0007669"/>
    <property type="project" value="TreeGrafter"/>
</dbReference>
<dbReference type="GO" id="GO:0004526">
    <property type="term" value="F:ribonuclease P activity"/>
    <property type="evidence" value="ECO:0007669"/>
    <property type="project" value="UniProtKB-UniRule"/>
</dbReference>
<dbReference type="GO" id="GO:0000049">
    <property type="term" value="F:tRNA binding"/>
    <property type="evidence" value="ECO:0007669"/>
    <property type="project" value="UniProtKB-UniRule"/>
</dbReference>
<dbReference type="GO" id="GO:0001682">
    <property type="term" value="P:tRNA 5'-leader removal"/>
    <property type="evidence" value="ECO:0007669"/>
    <property type="project" value="UniProtKB-UniRule"/>
</dbReference>
<dbReference type="Gene3D" id="3.30.230.10">
    <property type="match status" value="1"/>
</dbReference>
<dbReference type="HAMAP" id="MF_00227">
    <property type="entry name" value="RNase_P"/>
    <property type="match status" value="1"/>
</dbReference>
<dbReference type="InterPro" id="IPR020568">
    <property type="entry name" value="Ribosomal_Su5_D2-typ_SF"/>
</dbReference>
<dbReference type="InterPro" id="IPR014721">
    <property type="entry name" value="Ribsml_uS5_D2-typ_fold_subgr"/>
</dbReference>
<dbReference type="InterPro" id="IPR000100">
    <property type="entry name" value="RNase_P"/>
</dbReference>
<dbReference type="InterPro" id="IPR020539">
    <property type="entry name" value="RNase_P_CS"/>
</dbReference>
<dbReference type="NCBIfam" id="TIGR00188">
    <property type="entry name" value="rnpA"/>
    <property type="match status" value="1"/>
</dbReference>
<dbReference type="PANTHER" id="PTHR33992">
    <property type="entry name" value="RIBONUCLEASE P PROTEIN COMPONENT"/>
    <property type="match status" value="1"/>
</dbReference>
<dbReference type="PANTHER" id="PTHR33992:SF1">
    <property type="entry name" value="RIBONUCLEASE P PROTEIN COMPONENT"/>
    <property type="match status" value="1"/>
</dbReference>
<dbReference type="Pfam" id="PF00825">
    <property type="entry name" value="Ribonuclease_P"/>
    <property type="match status" value="1"/>
</dbReference>
<dbReference type="SUPFAM" id="SSF54211">
    <property type="entry name" value="Ribosomal protein S5 domain 2-like"/>
    <property type="match status" value="1"/>
</dbReference>
<dbReference type="PROSITE" id="PS00648">
    <property type="entry name" value="RIBONUCLEASE_P"/>
    <property type="match status" value="1"/>
</dbReference>
<accession>P43039</accession>
<accession>Q2SR02</accession>
<feature type="chain" id="PRO_0000198485" description="Ribonuclease P protein component">
    <location>
        <begin position="1"/>
        <end position="109"/>
    </location>
</feature>
<gene>
    <name evidence="1" type="primary">rnpA</name>
    <name type="ordered locus">MCAP_0869</name>
</gene>
<keyword id="KW-0255">Endonuclease</keyword>
<keyword id="KW-0378">Hydrolase</keyword>
<keyword id="KW-0540">Nuclease</keyword>
<keyword id="KW-0694">RNA-binding</keyword>
<keyword id="KW-0819">tRNA processing</keyword>
<protein>
    <recommendedName>
        <fullName evidence="1">Ribonuclease P protein component</fullName>
        <shortName evidence="1">RNase P protein</shortName>
        <shortName evidence="1">RNaseP protein</shortName>
        <ecNumber evidence="1">3.1.26.5</ecNumber>
    </recommendedName>
    <alternativeName>
        <fullName evidence="1">Protein C5</fullName>
    </alternativeName>
</protein>